<comment type="function">
    <text evidence="1">Binds directly to 23S rRNA. The L1 stalk is quite mobile in the ribosome, and is involved in E site tRNA release.</text>
</comment>
<comment type="function">
    <text evidence="1">Protein L1 is also a translational repressor protein, it controls the translation of the L11 operon by binding to its mRNA.</text>
</comment>
<comment type="subunit">
    <text evidence="1">Part of the 50S ribosomal subunit.</text>
</comment>
<comment type="similarity">
    <text evidence="1">Belongs to the universal ribosomal protein uL1 family.</text>
</comment>
<feature type="chain" id="PRO_0000308094" description="Large ribosomal subunit protein uL1">
    <location>
        <begin position="1"/>
        <end position="231"/>
    </location>
</feature>
<protein>
    <recommendedName>
        <fullName evidence="1">Large ribosomal subunit protein uL1</fullName>
    </recommendedName>
    <alternativeName>
        <fullName evidence="2">50S ribosomal protein L1</fullName>
    </alternativeName>
</protein>
<keyword id="KW-0678">Repressor</keyword>
<keyword id="KW-0687">Ribonucleoprotein</keyword>
<keyword id="KW-0689">Ribosomal protein</keyword>
<keyword id="KW-0694">RNA-binding</keyword>
<keyword id="KW-0699">rRNA-binding</keyword>
<keyword id="KW-0810">Translation regulation</keyword>
<keyword id="KW-0820">tRNA-binding</keyword>
<accession>A1AX78</accession>
<sequence>MAELTKKQKDILVKVESNKCYSINDALNLLKECATAKFDESIDMSINLGIDAKKSDQNVRGAIVLPNGTGKTVCVAVFTQGDNIAKAQDAGADVVGMEDLMKSMQDGDLNYDVVIASPDAMGVVGRLGQVLGPRGLMPNPKVGTVTSDVATAVNNAKTGQVRYRADKAGIVHACVGRVSFNVSALTQNINVLMEALKKIKPSSAKGVYFKKLSISSTMGPGLSVDLASLDI</sequence>
<gene>
    <name evidence="1" type="primary">rplA</name>
    <name type="ordered locus">Rmag_0814</name>
</gene>
<evidence type="ECO:0000255" key="1">
    <source>
        <dbReference type="HAMAP-Rule" id="MF_01318"/>
    </source>
</evidence>
<evidence type="ECO:0000305" key="2"/>
<proteinExistence type="inferred from homology"/>
<dbReference type="EMBL" id="CP000488">
    <property type="protein sequence ID" value="ABL02535.1"/>
    <property type="molecule type" value="Genomic_DNA"/>
</dbReference>
<dbReference type="RefSeq" id="WP_011738160.1">
    <property type="nucleotide sequence ID" value="NC_008610.1"/>
</dbReference>
<dbReference type="SMR" id="A1AX78"/>
<dbReference type="STRING" id="413404.Rmag_0814"/>
<dbReference type="KEGG" id="rma:Rmag_0814"/>
<dbReference type="eggNOG" id="COG0081">
    <property type="taxonomic scope" value="Bacteria"/>
</dbReference>
<dbReference type="HOGENOM" id="CLU_062853_0_0_6"/>
<dbReference type="OrthoDB" id="9803740at2"/>
<dbReference type="Proteomes" id="UP000002587">
    <property type="component" value="Chromosome"/>
</dbReference>
<dbReference type="GO" id="GO:0022625">
    <property type="term" value="C:cytosolic large ribosomal subunit"/>
    <property type="evidence" value="ECO:0007669"/>
    <property type="project" value="TreeGrafter"/>
</dbReference>
<dbReference type="GO" id="GO:0019843">
    <property type="term" value="F:rRNA binding"/>
    <property type="evidence" value="ECO:0007669"/>
    <property type="project" value="UniProtKB-UniRule"/>
</dbReference>
<dbReference type="GO" id="GO:0003735">
    <property type="term" value="F:structural constituent of ribosome"/>
    <property type="evidence" value="ECO:0007669"/>
    <property type="project" value="InterPro"/>
</dbReference>
<dbReference type="GO" id="GO:0000049">
    <property type="term" value="F:tRNA binding"/>
    <property type="evidence" value="ECO:0007669"/>
    <property type="project" value="UniProtKB-KW"/>
</dbReference>
<dbReference type="GO" id="GO:0006417">
    <property type="term" value="P:regulation of translation"/>
    <property type="evidence" value="ECO:0007669"/>
    <property type="project" value="UniProtKB-KW"/>
</dbReference>
<dbReference type="GO" id="GO:0006412">
    <property type="term" value="P:translation"/>
    <property type="evidence" value="ECO:0007669"/>
    <property type="project" value="UniProtKB-UniRule"/>
</dbReference>
<dbReference type="CDD" id="cd00403">
    <property type="entry name" value="Ribosomal_L1"/>
    <property type="match status" value="1"/>
</dbReference>
<dbReference type="FunFam" id="3.40.50.790:FF:000001">
    <property type="entry name" value="50S ribosomal protein L1"/>
    <property type="match status" value="1"/>
</dbReference>
<dbReference type="Gene3D" id="3.30.190.20">
    <property type="match status" value="1"/>
</dbReference>
<dbReference type="Gene3D" id="3.40.50.790">
    <property type="match status" value="1"/>
</dbReference>
<dbReference type="HAMAP" id="MF_01318_B">
    <property type="entry name" value="Ribosomal_uL1_B"/>
    <property type="match status" value="1"/>
</dbReference>
<dbReference type="InterPro" id="IPR005878">
    <property type="entry name" value="Ribosom_uL1_bac-type"/>
</dbReference>
<dbReference type="InterPro" id="IPR002143">
    <property type="entry name" value="Ribosomal_uL1"/>
</dbReference>
<dbReference type="InterPro" id="IPR023674">
    <property type="entry name" value="Ribosomal_uL1-like"/>
</dbReference>
<dbReference type="InterPro" id="IPR028364">
    <property type="entry name" value="Ribosomal_uL1/biogenesis"/>
</dbReference>
<dbReference type="InterPro" id="IPR016095">
    <property type="entry name" value="Ribosomal_uL1_3-a/b-sand"/>
</dbReference>
<dbReference type="InterPro" id="IPR023673">
    <property type="entry name" value="Ribosomal_uL1_CS"/>
</dbReference>
<dbReference type="NCBIfam" id="TIGR01169">
    <property type="entry name" value="rplA_bact"/>
    <property type="match status" value="1"/>
</dbReference>
<dbReference type="PANTHER" id="PTHR36427">
    <property type="entry name" value="54S RIBOSOMAL PROTEIN L1, MITOCHONDRIAL"/>
    <property type="match status" value="1"/>
</dbReference>
<dbReference type="PANTHER" id="PTHR36427:SF3">
    <property type="entry name" value="LARGE RIBOSOMAL SUBUNIT PROTEIN UL1M"/>
    <property type="match status" value="1"/>
</dbReference>
<dbReference type="Pfam" id="PF00687">
    <property type="entry name" value="Ribosomal_L1"/>
    <property type="match status" value="1"/>
</dbReference>
<dbReference type="PIRSF" id="PIRSF002155">
    <property type="entry name" value="Ribosomal_L1"/>
    <property type="match status" value="1"/>
</dbReference>
<dbReference type="SUPFAM" id="SSF56808">
    <property type="entry name" value="Ribosomal protein L1"/>
    <property type="match status" value="1"/>
</dbReference>
<dbReference type="PROSITE" id="PS01199">
    <property type="entry name" value="RIBOSOMAL_L1"/>
    <property type="match status" value="1"/>
</dbReference>
<reference key="1">
    <citation type="journal article" date="2007" name="Science">
        <title>The Calyptogena magnifica chemoautotrophic symbiont genome.</title>
        <authorList>
            <person name="Newton I.L.G."/>
            <person name="Woyke T."/>
            <person name="Auchtung T.A."/>
            <person name="Dilly G.F."/>
            <person name="Dutton R.J."/>
            <person name="Fisher M.C."/>
            <person name="Fontanez K.M."/>
            <person name="Lau E."/>
            <person name="Stewart F.J."/>
            <person name="Richardson P.M."/>
            <person name="Barry K.W."/>
            <person name="Saunders E."/>
            <person name="Detter J.C."/>
            <person name="Wu D."/>
            <person name="Eisen J.A."/>
            <person name="Cavanaugh C.M."/>
        </authorList>
    </citation>
    <scope>NUCLEOTIDE SEQUENCE [LARGE SCALE GENOMIC DNA]</scope>
</reference>
<organism>
    <name type="scientific">Ruthia magnifica subsp. Calyptogena magnifica</name>
    <dbReference type="NCBI Taxonomy" id="413404"/>
    <lineage>
        <taxon>Bacteria</taxon>
        <taxon>Pseudomonadati</taxon>
        <taxon>Pseudomonadota</taxon>
        <taxon>Gammaproteobacteria</taxon>
        <taxon>Candidatus Pseudothioglobaceae</taxon>
        <taxon>Candidatus Ruthturnera</taxon>
    </lineage>
</organism>
<name>RL1_RUTMC</name>